<accession>Q8J308</accession>
<gene>
    <name type="primary">fba</name>
    <name type="ordered locus">TK0989</name>
</gene>
<feature type="chain" id="PRO_0000138951" description="Fructose-bisphosphate aldolase class 1">
    <location>
        <begin position="1"/>
        <end position="281"/>
    </location>
</feature>
<feature type="active site" description="Schiff-base intermediate with dihydroxyacetone-P" evidence="1">
    <location>
        <position position="191"/>
    </location>
</feature>
<comment type="catalytic activity">
    <reaction>
        <text>beta-D-fructose 1,6-bisphosphate = D-glyceraldehyde 3-phosphate + dihydroxyacetone phosphate</text>
        <dbReference type="Rhea" id="RHEA:14729"/>
        <dbReference type="ChEBI" id="CHEBI:32966"/>
        <dbReference type="ChEBI" id="CHEBI:57642"/>
        <dbReference type="ChEBI" id="CHEBI:59776"/>
        <dbReference type="EC" id="4.1.2.13"/>
    </reaction>
</comment>
<comment type="activity regulation">
    <text evidence="1">Activated by citrate.</text>
</comment>
<comment type="subunit">
    <text evidence="1">Homooctamer.</text>
</comment>
<comment type="subcellular location">
    <subcellularLocation>
        <location evidence="4">Cytoplasm</location>
    </subcellularLocation>
    <subcellularLocation>
        <location evidence="2">Chromosome</location>
    </subcellularLocation>
</comment>
<comment type="similarity">
    <text evidence="3">Belongs to the DeoC/FbaB aldolase family.</text>
</comment>
<name>ALF1_THEKO</name>
<sequence length="281" mass="31240">MDAYQSVGIRRRLKRFFRRDGRALIFAMDHGFEHGPTDFEPVWEHVNPRIIIRKVVRAGVDGVMMLPGIVRMAGDELKPDTGLMIKLTSKTELRPKEEQLLQSQLGYVEDAIKLGADAIAATVYWGSPQEDVMMRQFAEIASYAHDLGFPVVQFAYPRGPYINEKYGKKEDYRVVMYGARAAAETGADMIKTYWTGSKETFAKVVDAAAGVPVLLSGGAKTDNPVDFLKVVWDVIEAGGAGAVVGRNIFQRENPEPMIKALIRVIHRNEDPEEAAKAEGLI</sequence>
<proteinExistence type="evidence at protein level"/>
<organism>
    <name type="scientific">Thermococcus kodakarensis (strain ATCC BAA-918 / JCM 12380 / KOD1)</name>
    <name type="common">Pyrococcus kodakaraensis (strain KOD1)</name>
    <dbReference type="NCBI Taxonomy" id="69014"/>
    <lineage>
        <taxon>Archaea</taxon>
        <taxon>Methanobacteriati</taxon>
        <taxon>Methanobacteriota</taxon>
        <taxon>Thermococci</taxon>
        <taxon>Thermococcales</taxon>
        <taxon>Thermococcaceae</taxon>
        <taxon>Thermococcus</taxon>
    </lineage>
</organism>
<keyword id="KW-0158">Chromosome</keyword>
<keyword id="KW-0963">Cytoplasm</keyword>
<keyword id="KW-0324">Glycolysis</keyword>
<keyword id="KW-0456">Lyase</keyword>
<keyword id="KW-1185">Reference proteome</keyword>
<keyword id="KW-0704">Schiff base</keyword>
<evidence type="ECO:0000250" key="1"/>
<evidence type="ECO:0000269" key="2">
    <source>
    </source>
</evidence>
<evidence type="ECO:0000305" key="3"/>
<evidence type="ECO:0000305" key="4">
    <source>
    </source>
</evidence>
<dbReference type="EC" id="4.1.2.13"/>
<dbReference type="EMBL" id="AB083709">
    <property type="protein sequence ID" value="BAC21177.1"/>
    <property type="molecule type" value="Genomic_DNA"/>
</dbReference>
<dbReference type="EMBL" id="AP006878">
    <property type="protein sequence ID" value="BAD85178.1"/>
    <property type="molecule type" value="Genomic_DNA"/>
</dbReference>
<dbReference type="RefSeq" id="WP_011249940.1">
    <property type="nucleotide sequence ID" value="NC_006624.1"/>
</dbReference>
<dbReference type="SMR" id="Q8J308"/>
<dbReference type="FunCoup" id="Q8J308">
    <property type="interactions" value="85"/>
</dbReference>
<dbReference type="STRING" id="69014.TK0989"/>
<dbReference type="EnsemblBacteria" id="BAD85178">
    <property type="protein sequence ID" value="BAD85178"/>
    <property type="gene ID" value="TK0989"/>
</dbReference>
<dbReference type="GeneID" id="78447502"/>
<dbReference type="KEGG" id="tko:TK0989"/>
<dbReference type="PATRIC" id="fig|69014.16.peg.967"/>
<dbReference type="eggNOG" id="arCOG04044">
    <property type="taxonomic scope" value="Archaea"/>
</dbReference>
<dbReference type="HOGENOM" id="CLU_057069_2_2_2"/>
<dbReference type="InParanoid" id="Q8J308"/>
<dbReference type="OrthoDB" id="6329at2157"/>
<dbReference type="PhylomeDB" id="Q8J308"/>
<dbReference type="SABIO-RK" id="Q8J308"/>
<dbReference type="Proteomes" id="UP000000536">
    <property type="component" value="Chromosome"/>
</dbReference>
<dbReference type="GO" id="GO:0005694">
    <property type="term" value="C:chromosome"/>
    <property type="evidence" value="ECO:0007669"/>
    <property type="project" value="UniProtKB-SubCell"/>
</dbReference>
<dbReference type="GO" id="GO:0005737">
    <property type="term" value="C:cytoplasm"/>
    <property type="evidence" value="ECO:0007669"/>
    <property type="project" value="UniProtKB-SubCell"/>
</dbReference>
<dbReference type="GO" id="GO:0016747">
    <property type="term" value="F:acyltransferase activity, transferring groups other than amino-acyl groups"/>
    <property type="evidence" value="ECO:0000318"/>
    <property type="project" value="GO_Central"/>
</dbReference>
<dbReference type="GO" id="GO:0004332">
    <property type="term" value="F:fructose-bisphosphate aldolase activity"/>
    <property type="evidence" value="ECO:0007669"/>
    <property type="project" value="UniProtKB-EC"/>
</dbReference>
<dbReference type="GO" id="GO:0006096">
    <property type="term" value="P:glycolytic process"/>
    <property type="evidence" value="ECO:0007669"/>
    <property type="project" value="UniProtKB-KW"/>
</dbReference>
<dbReference type="CDD" id="cd00958">
    <property type="entry name" value="DhnA"/>
    <property type="match status" value="1"/>
</dbReference>
<dbReference type="Gene3D" id="3.20.20.70">
    <property type="entry name" value="Aldolase class I"/>
    <property type="match status" value="1"/>
</dbReference>
<dbReference type="InterPro" id="IPR013785">
    <property type="entry name" value="Aldolase_TIM"/>
</dbReference>
<dbReference type="InterPro" id="IPR002915">
    <property type="entry name" value="DeoC/FbaB/LacD_aldolase"/>
</dbReference>
<dbReference type="InterPro" id="IPR050456">
    <property type="entry name" value="DeoC/FbaB_aldolase"/>
</dbReference>
<dbReference type="InterPro" id="IPR053414">
    <property type="entry name" value="FBA_class_1"/>
</dbReference>
<dbReference type="InterPro" id="IPR041720">
    <property type="entry name" value="FbaB-like"/>
</dbReference>
<dbReference type="NCBIfam" id="NF040816">
    <property type="entry name" value="Fbpase1_Arch"/>
    <property type="match status" value="1"/>
</dbReference>
<dbReference type="NCBIfam" id="NF005556">
    <property type="entry name" value="PRK07226.1"/>
    <property type="match status" value="1"/>
</dbReference>
<dbReference type="PANTHER" id="PTHR47916:SF1">
    <property type="entry name" value="3-HYDROXY-5-PHOSPHONOOXYPENTANE-2,4-DIONE THIOLASE"/>
    <property type="match status" value="1"/>
</dbReference>
<dbReference type="PANTHER" id="PTHR47916">
    <property type="entry name" value="FRUCTOSE-BISPHOSPHATE ALDOLASE CLASS 1"/>
    <property type="match status" value="1"/>
</dbReference>
<dbReference type="Pfam" id="PF01791">
    <property type="entry name" value="DeoC"/>
    <property type="match status" value="1"/>
</dbReference>
<dbReference type="PIRSF" id="PIRSF038992">
    <property type="entry name" value="Aldolase_Ia"/>
    <property type="match status" value="1"/>
</dbReference>
<dbReference type="SMART" id="SM01133">
    <property type="entry name" value="DeoC"/>
    <property type="match status" value="1"/>
</dbReference>
<dbReference type="SUPFAM" id="SSF51569">
    <property type="entry name" value="Aldolase"/>
    <property type="match status" value="1"/>
</dbReference>
<reference key="1">
    <citation type="submission" date="2002-04" db="EMBL/GenBank/DDBJ databases">
        <title>Fructose-1,6-bisphosphate aldolase from Thermococcus kodakaraensis KOD1.</title>
        <authorList>
            <person name="Imanaka H."/>
            <person name="Fukui T."/>
            <person name="Atomi H."/>
            <person name="Imanaka T."/>
        </authorList>
    </citation>
    <scope>NUCLEOTIDE SEQUENCE [GENOMIC DNA]</scope>
    <source>
        <strain>ATCC BAA-918 / JCM 12380 / KOD1</strain>
    </source>
</reference>
<reference key="2">
    <citation type="journal article" date="2005" name="Genome Res.">
        <title>Complete genome sequence of the hyperthermophilic archaeon Thermococcus kodakaraensis KOD1 and comparison with Pyrococcus genomes.</title>
        <authorList>
            <person name="Fukui T."/>
            <person name="Atomi H."/>
            <person name="Kanai T."/>
            <person name="Matsumi R."/>
            <person name="Fujiwara S."/>
            <person name="Imanaka T."/>
        </authorList>
    </citation>
    <scope>NUCLEOTIDE SEQUENCE [LARGE SCALE GENOMIC DNA]</scope>
    <source>
        <strain>ATCC BAA-918 / JCM 12380 / KOD1</strain>
    </source>
</reference>
<reference key="3">
    <citation type="journal article" date="2011" name="Mol. Biol. Cell">
        <title>Histone and TK0471/TrmBL2 form a novel heterogeneous genome architecture in the hyperthermophilic archaeon Thermococcus kodakarensis.</title>
        <authorList>
            <person name="Maruyama H."/>
            <person name="Shin M."/>
            <person name="Oda T."/>
            <person name="Matsumi R."/>
            <person name="Ohniwa R.L."/>
            <person name="Itoh T."/>
            <person name="Shirahige K."/>
            <person name="Imanaka T."/>
            <person name="Atomi H."/>
            <person name="Yoshimura S.H."/>
            <person name="Takeyasu K."/>
        </authorList>
    </citation>
    <scope>IDENTIFICATION BY MASS SPECTROMETRY</scope>
    <scope>SUBCELLULAR LOCATION</scope>
    <source>
        <strain>ATCC BAA-918 / JCM 12380 / KOD1</strain>
    </source>
</reference>
<protein>
    <recommendedName>
        <fullName>Fructose-bisphosphate aldolase class 1</fullName>
        <ecNumber>4.1.2.13</ecNumber>
    </recommendedName>
    <alternativeName>
        <fullName>Fructose-bisphosphate aldolase class I</fullName>
        <shortName>FBP aldolase</shortName>
    </alternativeName>
    <alternativeName>
        <fullName>Tk-fba</fullName>
    </alternativeName>
</protein>